<keyword id="KW-0963">Cytoplasm</keyword>
<keyword id="KW-0227">DNA damage</keyword>
<keyword id="KW-0234">DNA repair</keyword>
<keyword id="KW-0378">Hydrolase</keyword>
<feature type="chain" id="PRO_1000096579" description="Uracil-DNA glycosylase">
    <location>
        <begin position="1"/>
        <end position="229"/>
    </location>
</feature>
<feature type="active site" description="Proton acceptor" evidence="1">
    <location>
        <position position="64"/>
    </location>
</feature>
<comment type="function">
    <text evidence="1">Excises uracil residues from the DNA which can arise as a result of misincorporation of dUMP residues by DNA polymerase or due to deamination of cytosine.</text>
</comment>
<comment type="catalytic activity">
    <reaction evidence="1">
        <text>Hydrolyzes single-stranded DNA or mismatched double-stranded DNA and polynucleotides, releasing free uracil.</text>
        <dbReference type="EC" id="3.2.2.27"/>
    </reaction>
</comment>
<comment type="subcellular location">
    <subcellularLocation>
        <location evidence="1">Cytoplasm</location>
    </subcellularLocation>
</comment>
<comment type="similarity">
    <text evidence="1">Belongs to the uracil-DNA glycosylase (UDG) superfamily. UNG family.</text>
</comment>
<evidence type="ECO:0000255" key="1">
    <source>
        <dbReference type="HAMAP-Rule" id="MF_00148"/>
    </source>
</evidence>
<proteinExistence type="inferred from homology"/>
<protein>
    <recommendedName>
        <fullName evidence="1">Uracil-DNA glycosylase</fullName>
        <shortName evidence="1">UDG</shortName>
        <ecNumber evidence="1">3.2.2.27</ecNumber>
    </recommendedName>
</protein>
<dbReference type="EC" id="3.2.2.27" evidence="1"/>
<dbReference type="EMBL" id="AP009240">
    <property type="protein sequence ID" value="BAG78393.1"/>
    <property type="molecule type" value="Genomic_DNA"/>
</dbReference>
<dbReference type="RefSeq" id="WP_001262716.1">
    <property type="nucleotide sequence ID" value="NC_011415.1"/>
</dbReference>
<dbReference type="SMR" id="B6I5F5"/>
<dbReference type="GeneID" id="93774506"/>
<dbReference type="KEGG" id="ecy:ECSE_2869"/>
<dbReference type="HOGENOM" id="CLU_032162_3_1_6"/>
<dbReference type="Proteomes" id="UP000008199">
    <property type="component" value="Chromosome"/>
</dbReference>
<dbReference type="GO" id="GO:0005737">
    <property type="term" value="C:cytoplasm"/>
    <property type="evidence" value="ECO:0007669"/>
    <property type="project" value="UniProtKB-SubCell"/>
</dbReference>
<dbReference type="GO" id="GO:0004844">
    <property type="term" value="F:uracil DNA N-glycosylase activity"/>
    <property type="evidence" value="ECO:0007669"/>
    <property type="project" value="UniProtKB-UniRule"/>
</dbReference>
<dbReference type="GO" id="GO:0097510">
    <property type="term" value="P:base-excision repair, AP site formation via deaminated base removal"/>
    <property type="evidence" value="ECO:0007669"/>
    <property type="project" value="TreeGrafter"/>
</dbReference>
<dbReference type="CDD" id="cd10027">
    <property type="entry name" value="UDG-F1-like"/>
    <property type="match status" value="1"/>
</dbReference>
<dbReference type="FunFam" id="3.40.470.10:FF:000001">
    <property type="entry name" value="Uracil-DNA glycosylase"/>
    <property type="match status" value="1"/>
</dbReference>
<dbReference type="Gene3D" id="3.40.470.10">
    <property type="entry name" value="Uracil-DNA glycosylase-like domain"/>
    <property type="match status" value="1"/>
</dbReference>
<dbReference type="HAMAP" id="MF_00148">
    <property type="entry name" value="UDG"/>
    <property type="match status" value="1"/>
</dbReference>
<dbReference type="InterPro" id="IPR002043">
    <property type="entry name" value="UDG_fam1"/>
</dbReference>
<dbReference type="InterPro" id="IPR018085">
    <property type="entry name" value="Ura-DNA_Glyclase_AS"/>
</dbReference>
<dbReference type="InterPro" id="IPR005122">
    <property type="entry name" value="Uracil-DNA_glycosylase-like"/>
</dbReference>
<dbReference type="InterPro" id="IPR036895">
    <property type="entry name" value="Uracil-DNA_glycosylase-like_sf"/>
</dbReference>
<dbReference type="NCBIfam" id="NF003588">
    <property type="entry name" value="PRK05254.1-1"/>
    <property type="match status" value="1"/>
</dbReference>
<dbReference type="NCBIfam" id="NF003589">
    <property type="entry name" value="PRK05254.1-2"/>
    <property type="match status" value="1"/>
</dbReference>
<dbReference type="NCBIfam" id="NF003591">
    <property type="entry name" value="PRK05254.1-4"/>
    <property type="match status" value="1"/>
</dbReference>
<dbReference type="NCBIfam" id="NF003592">
    <property type="entry name" value="PRK05254.1-5"/>
    <property type="match status" value="1"/>
</dbReference>
<dbReference type="NCBIfam" id="TIGR00628">
    <property type="entry name" value="ung"/>
    <property type="match status" value="1"/>
</dbReference>
<dbReference type="PANTHER" id="PTHR11264">
    <property type="entry name" value="URACIL-DNA GLYCOSYLASE"/>
    <property type="match status" value="1"/>
</dbReference>
<dbReference type="PANTHER" id="PTHR11264:SF0">
    <property type="entry name" value="URACIL-DNA GLYCOSYLASE"/>
    <property type="match status" value="1"/>
</dbReference>
<dbReference type="Pfam" id="PF03167">
    <property type="entry name" value="UDG"/>
    <property type="match status" value="1"/>
</dbReference>
<dbReference type="SMART" id="SM00986">
    <property type="entry name" value="UDG"/>
    <property type="match status" value="1"/>
</dbReference>
<dbReference type="SMART" id="SM00987">
    <property type="entry name" value="UreE_C"/>
    <property type="match status" value="1"/>
</dbReference>
<dbReference type="SUPFAM" id="SSF52141">
    <property type="entry name" value="Uracil-DNA glycosylase-like"/>
    <property type="match status" value="1"/>
</dbReference>
<dbReference type="PROSITE" id="PS00130">
    <property type="entry name" value="U_DNA_GLYCOSYLASE"/>
    <property type="match status" value="1"/>
</dbReference>
<sequence length="229" mass="25693">MANELTWHDVLAEEKQQPYFLNTLQTVASERQSGVTIYPPQKDVFNAFRFTELGDVKVVILGQDPYHGPGQAHGLAFSVRPGIAIPPSLLNMYKELENTIPGFTRPNHGYLESWARQGVLLLNTVLTVRAGQAHSHASLGWETFTDKVISLINQHREGVVFLLWGSHAQKKGAIIDKQRHHVLKAPHPSPLSAHRGFFGCNHFVLANQWLEQRGETPIDWMPVLPAESE</sequence>
<reference key="1">
    <citation type="journal article" date="2008" name="DNA Res.">
        <title>Complete genome sequence and comparative analysis of the wild-type commensal Escherichia coli strain SE11 isolated from a healthy adult.</title>
        <authorList>
            <person name="Oshima K."/>
            <person name="Toh H."/>
            <person name="Ogura Y."/>
            <person name="Sasamoto H."/>
            <person name="Morita H."/>
            <person name="Park S.-H."/>
            <person name="Ooka T."/>
            <person name="Iyoda S."/>
            <person name="Taylor T.D."/>
            <person name="Hayashi T."/>
            <person name="Itoh K."/>
            <person name="Hattori M."/>
        </authorList>
    </citation>
    <scope>NUCLEOTIDE SEQUENCE [LARGE SCALE GENOMIC DNA]</scope>
    <source>
        <strain>SE11</strain>
    </source>
</reference>
<accession>B6I5F5</accession>
<gene>
    <name evidence="1" type="primary">ung</name>
    <name type="ordered locus">ECSE_2869</name>
</gene>
<organism>
    <name type="scientific">Escherichia coli (strain SE11)</name>
    <dbReference type="NCBI Taxonomy" id="409438"/>
    <lineage>
        <taxon>Bacteria</taxon>
        <taxon>Pseudomonadati</taxon>
        <taxon>Pseudomonadota</taxon>
        <taxon>Gammaproteobacteria</taxon>
        <taxon>Enterobacterales</taxon>
        <taxon>Enterobacteriaceae</taxon>
        <taxon>Escherichia</taxon>
    </lineage>
</organism>
<name>UNG_ECOSE</name>